<organismHost>
    <name type="scientific">Homo sapiens</name>
    <name type="common">Human</name>
    <dbReference type="NCBI Taxonomy" id="9606"/>
</organismHost>
<dbReference type="EMBL" id="DQ490538">
    <property type="protein sequence ID" value="ABF67545.1"/>
    <property type="molecule type" value="Genomic_RNA"/>
</dbReference>
<dbReference type="SMR" id="A4ZCW7"/>
<dbReference type="Proteomes" id="UP000001454">
    <property type="component" value="Genome"/>
</dbReference>
<dbReference type="GO" id="GO:0019031">
    <property type="term" value="C:viral envelope"/>
    <property type="evidence" value="ECO:0007669"/>
    <property type="project" value="UniProtKB-UniRule"/>
</dbReference>
<dbReference type="GO" id="GO:0039626">
    <property type="term" value="C:viral intermediate capsid"/>
    <property type="evidence" value="ECO:0007669"/>
    <property type="project" value="UniProtKB-UniRule"/>
</dbReference>
<dbReference type="GO" id="GO:0046789">
    <property type="term" value="F:host cell surface receptor binding"/>
    <property type="evidence" value="ECO:0007669"/>
    <property type="project" value="UniProtKB-UniRule"/>
</dbReference>
<dbReference type="GO" id="GO:0046872">
    <property type="term" value="F:metal ion binding"/>
    <property type="evidence" value="ECO:0007669"/>
    <property type="project" value="UniProtKB-UniRule"/>
</dbReference>
<dbReference type="GO" id="GO:0005198">
    <property type="term" value="F:structural molecule activity"/>
    <property type="evidence" value="ECO:0007669"/>
    <property type="project" value="UniProtKB-UniRule"/>
</dbReference>
<dbReference type="GO" id="GO:0019064">
    <property type="term" value="P:fusion of virus membrane with host plasma membrane"/>
    <property type="evidence" value="ECO:0007669"/>
    <property type="project" value="UniProtKB-UniRule"/>
</dbReference>
<dbReference type="FunFam" id="2.60.120.170:FF:000001">
    <property type="entry name" value="Intermediate capsid protein VP6"/>
    <property type="match status" value="1"/>
</dbReference>
<dbReference type="Gene3D" id="2.60.120.170">
    <property type="match status" value="1"/>
</dbReference>
<dbReference type="Gene3D" id="1.10.1350.10">
    <property type="entry name" value="Viral capsid alpha domain"/>
    <property type="match status" value="1"/>
</dbReference>
<dbReference type="HAMAP" id="MF_04126">
    <property type="entry name" value="Rota_VP6"/>
    <property type="match status" value="1"/>
</dbReference>
<dbReference type="HAMAP" id="MF_04129">
    <property type="entry name" value="Rota_VP6_A"/>
    <property type="match status" value="1"/>
</dbReference>
<dbReference type="InterPro" id="IPR008980">
    <property type="entry name" value="Capsid_hemagglutn"/>
</dbReference>
<dbReference type="InterPro" id="IPR001385">
    <property type="entry name" value="Rotavirus_A/C_VP6"/>
</dbReference>
<dbReference type="InterPro" id="IPR008935">
    <property type="entry name" value="Virus_capsid_a-hlx_vir"/>
</dbReference>
<dbReference type="Pfam" id="PF00980">
    <property type="entry name" value="Rota_Capsid_VP6"/>
    <property type="match status" value="1"/>
</dbReference>
<dbReference type="SUPFAM" id="SSF48345">
    <property type="entry name" value="A virus capsid protein alpha-helical domain"/>
    <property type="match status" value="1"/>
</dbReference>
<dbReference type="SUPFAM" id="SSF49818">
    <property type="entry name" value="Viral protein domain"/>
    <property type="match status" value="1"/>
</dbReference>
<keyword id="KW-0106">Calcium</keyword>
<keyword id="KW-0167">Capsid protein</keyword>
<keyword id="KW-1154">Intermediate capsid protein</keyword>
<keyword id="KW-0479">Metal-binding</keyword>
<keyword id="KW-0832">Ubl conjugation</keyword>
<keyword id="KW-0946">Virion</keyword>
<keyword id="KW-0862">Zinc</keyword>
<accession>A4ZCW7</accession>
<sequence length="397" mass="44843">MDVLFSLSKTLKDARDKIVEGTLYSNVSDLIQQFNQMIVTMNGNDFQTGGIGNLPVRNWNFDFGLLGTTLLNLDANYVETARTTINYFVDFVDNVCMDEMARESQRNGIAPQSDALRKLSGIRFKRINFDNSSEYIENWNLQNRRQRTGFTFHKPNIFPYSFSFTLNRSQPQHDNLMGTMWLNAGSEIQVAGFDYSCALNAPANTQQFEHIVQLRRVLTTATITLLPDAERFGFPRVVNSADGATTWYFNPVVLRPNNVEVEFLLNGQIINTYQARFGTITARNFDTIRLSFQLMRPPNMTPAVAALFPNAQPFVHHATVGLTLRIDSAVCESVLADANETMLANVTSVRQEYAVPVGPVFPPGMNWTELITNYSPSREDNLQRVFTVASIRSMLVK</sequence>
<evidence type="ECO:0000255" key="1">
    <source>
        <dbReference type="HAMAP-Rule" id="MF_04129"/>
    </source>
</evidence>
<proteinExistence type="inferred from homology"/>
<comment type="function">
    <text evidence="1">Intermediate capsid protein that self assembles to form an icosahedral capsid with a T=13 symmetry, which consists of 230 trimers of VP6, with channels at each of its five-fold vertices. This capsid constitutes the middle concentric layer of the viral mature particle. The innermost VP2 capsid and the intermediate VP6 capsid remain intact following cell entry to protect the dsRNA from degradation and to prevent unfavorable antiviral responses in the host cell during all the replication cycle of the virus. Nascent transcripts are transcribed within the structural confines of this double-layered particle (DLP) and are extruded through the channels at the five-fold axes. VP6 is required for the transcription activity of the DLP.</text>
</comment>
<comment type="subunit">
    <text evidence="1">Homotrimer. Interacts with the inner capsid protein VP2. Interacts with the outer capsid glycoprotein VP7. Interacts with the outer capsid protein VP5*.</text>
</comment>
<comment type="subcellular location">
    <subcellularLocation>
        <location evidence="1">Virion</location>
    </subcellularLocation>
    <text evidence="1">Component of the intermediate capsid. Also found in spherical cytoplasmic structures, called virus factories, that appear early after infection and are the site of viral replication and packaging.</text>
</comment>
<comment type="PTM">
    <text evidence="1">The N-terminus is blocked.</text>
</comment>
<comment type="PTM">
    <text evidence="1">Sumoylated with SUMO1 and SUMO2. Sumoylation of viral proteins seems to have a positive role on viral replication.</text>
</comment>
<comment type="miscellaneous">
    <text evidence="1">The VP6 trimer contains a zinc ion located at the center of the molecule. The zinc ion is not essential for either trimerization or transcription activity of the DLP. Zinc-depleted VP6 has an increased sensitivity to proteases.</text>
</comment>
<comment type="similarity">
    <text evidence="1">Belongs to the rotavirus VP6 family.</text>
</comment>
<protein>
    <recommendedName>
        <fullName evidence="1">Intermediate capsid protein VP6</fullName>
    </recommendedName>
</protein>
<name>VP6_ROTH3</name>
<feature type="chain" id="PRO_0000375232" description="Intermediate capsid protein VP6">
    <location>
        <begin position="1"/>
        <end position="397"/>
    </location>
</feature>
<feature type="region of interest" description="Interaction with the inner capsid protein VP2" evidence="1">
    <location>
        <begin position="62"/>
        <end position="73"/>
    </location>
</feature>
<feature type="binding site" evidence="1">
    <location>
        <position position="153"/>
    </location>
    <ligand>
        <name>Zn(2+)</name>
        <dbReference type="ChEBI" id="CHEBI:29105"/>
        <note>ligand shared between all trimeric partners</note>
    </ligand>
</feature>
<feature type="binding site" evidence="1">
    <location>
        <position position="266"/>
    </location>
    <ligand>
        <name>Ca(2+)</name>
        <dbReference type="ChEBI" id="CHEBI:29108"/>
    </ligand>
</feature>
<feature type="binding site" evidence="1">
    <location>
        <position position="286"/>
    </location>
    <ligand>
        <name>Ca(2+)</name>
        <dbReference type="ChEBI" id="CHEBI:29108"/>
    </ligand>
</feature>
<organism>
    <name type="scientific">Rotavirus A (strain RVA/Human/Japan/AU-1/1982/G3P3[9])</name>
    <name type="common">RV-A</name>
    <dbReference type="NCBI Taxonomy" id="39013"/>
    <lineage>
        <taxon>Viruses</taxon>
        <taxon>Riboviria</taxon>
        <taxon>Orthornavirae</taxon>
        <taxon>Duplornaviricota</taxon>
        <taxon>Resentoviricetes</taxon>
        <taxon>Reovirales</taxon>
        <taxon>Sedoreoviridae</taxon>
        <taxon>Rotavirus</taxon>
        <taxon>Rotavirus A</taxon>
    </lineage>
</organism>
<reference key="1">
    <citation type="journal article" date="2008" name="J. Virol.">
        <title>Full genome-based classification of rotaviruses reveals a common origin between human Wa-Like and porcine rotavirus strains and human DS-1-like and bovine rotavirus strains.</title>
        <authorList>
            <person name="Matthijnssens J."/>
            <person name="Ciarlet M."/>
            <person name="Heiman E.M."/>
            <person name="Arijs I."/>
            <person name="Delbeke T."/>
            <person name="McDonald S.M."/>
            <person name="Palombo E.A."/>
            <person name="Iturriza-Gomara M."/>
            <person name="Maes P."/>
            <person name="Patton J.T."/>
            <person name="Rahman M."/>
            <person name="Van Ranst M."/>
        </authorList>
    </citation>
    <scope>NUCLEOTIDE SEQUENCE [GENOMIC RNA]</scope>
</reference>